<protein>
    <recommendedName>
        <fullName evidence="3">DExH-box ATP-dependent RNA helicase DExH3</fullName>
        <ecNumber evidence="3">3.6.4.13</ecNumber>
    </recommendedName>
</protein>
<accession>F4HYJ7</accession>
<accession>Q9C734</accession>
<gene>
    <name evidence="4" type="ordered locus">At1g48650</name>
    <name evidence="5" type="ORF">F11I4_16</name>
</gene>
<dbReference type="EC" id="3.6.4.13" evidence="3"/>
<dbReference type="EMBL" id="AC073555">
    <property type="protein sequence ID" value="AAG60124.1"/>
    <property type="status" value="ALT_SEQ"/>
    <property type="molecule type" value="Genomic_DNA"/>
</dbReference>
<dbReference type="EMBL" id="CP002684">
    <property type="protein sequence ID" value="AEE32333.1"/>
    <property type="molecule type" value="Genomic_DNA"/>
</dbReference>
<dbReference type="RefSeq" id="NP_175298.2">
    <molecule id="F4HYJ7-1"/>
    <property type="nucleotide sequence ID" value="NM_103761.6"/>
</dbReference>
<dbReference type="SMR" id="F4HYJ7"/>
<dbReference type="FunCoup" id="F4HYJ7">
    <property type="interactions" value="3838"/>
</dbReference>
<dbReference type="STRING" id="3702.F4HYJ7"/>
<dbReference type="GlyGen" id="F4HYJ7">
    <property type="glycosylation" value="1 site"/>
</dbReference>
<dbReference type="iPTMnet" id="F4HYJ7"/>
<dbReference type="PaxDb" id="3702-AT1G48650.2"/>
<dbReference type="ProteomicsDB" id="224077">
    <molecule id="F4HYJ7-1"/>
</dbReference>
<dbReference type="EnsemblPlants" id="AT1G48650.1">
    <molecule id="F4HYJ7-1"/>
    <property type="protein sequence ID" value="AT1G48650.1"/>
    <property type="gene ID" value="AT1G48650"/>
</dbReference>
<dbReference type="GeneID" id="841287"/>
<dbReference type="Gramene" id="AT1G48650.1">
    <molecule id="F4HYJ7-1"/>
    <property type="protein sequence ID" value="AT1G48650.1"/>
    <property type="gene ID" value="AT1G48650"/>
</dbReference>
<dbReference type="KEGG" id="ath:AT1G48650"/>
<dbReference type="Araport" id="AT1G48650"/>
<dbReference type="TAIR" id="AT1G48650"/>
<dbReference type="eggNOG" id="KOG0920">
    <property type="taxonomic scope" value="Eukaryota"/>
</dbReference>
<dbReference type="InParanoid" id="F4HYJ7"/>
<dbReference type="OMA" id="LENIDEW"/>
<dbReference type="PRO" id="PR:F4HYJ7"/>
<dbReference type="Proteomes" id="UP000006548">
    <property type="component" value="Chromosome 1"/>
</dbReference>
<dbReference type="ExpressionAtlas" id="F4HYJ7">
    <property type="expression patterns" value="baseline and differential"/>
</dbReference>
<dbReference type="GO" id="GO:0005524">
    <property type="term" value="F:ATP binding"/>
    <property type="evidence" value="ECO:0007669"/>
    <property type="project" value="UniProtKB-KW"/>
</dbReference>
<dbReference type="GO" id="GO:0016887">
    <property type="term" value="F:ATP hydrolysis activity"/>
    <property type="evidence" value="ECO:0007669"/>
    <property type="project" value="RHEA"/>
</dbReference>
<dbReference type="GO" id="GO:0003723">
    <property type="term" value="F:RNA binding"/>
    <property type="evidence" value="ECO:0007669"/>
    <property type="project" value="UniProtKB-KW"/>
</dbReference>
<dbReference type="GO" id="GO:0003724">
    <property type="term" value="F:RNA helicase activity"/>
    <property type="evidence" value="ECO:0007669"/>
    <property type="project" value="UniProtKB-EC"/>
</dbReference>
<dbReference type="CDD" id="cd17917">
    <property type="entry name" value="DEXHc_RHA-like"/>
    <property type="match status" value="1"/>
</dbReference>
<dbReference type="CDD" id="cd00048">
    <property type="entry name" value="DSRM_SF"/>
    <property type="match status" value="1"/>
</dbReference>
<dbReference type="CDD" id="cd18791">
    <property type="entry name" value="SF2_C_RHA"/>
    <property type="match status" value="1"/>
</dbReference>
<dbReference type="FunFam" id="3.40.50.300:FF:000480">
    <property type="entry name" value="DExH-box ATP-dependent RNA helicase DExH3"/>
    <property type="match status" value="1"/>
</dbReference>
<dbReference type="FunFam" id="3.40.50.300:FF:000526">
    <property type="entry name" value="DExH-box ATP-dependent RNA helicase DExH3"/>
    <property type="match status" value="1"/>
</dbReference>
<dbReference type="FunFam" id="1.20.120.1080:FF:000002">
    <property type="entry name" value="Putative ATP-dependent RNA helicase DHX36"/>
    <property type="match status" value="1"/>
</dbReference>
<dbReference type="Gene3D" id="1.20.120.1080">
    <property type="match status" value="1"/>
</dbReference>
<dbReference type="Gene3D" id="3.30.160.20">
    <property type="match status" value="1"/>
</dbReference>
<dbReference type="Gene3D" id="3.40.50.300">
    <property type="entry name" value="P-loop containing nucleotide triphosphate hydrolases"/>
    <property type="match status" value="2"/>
</dbReference>
<dbReference type="InterPro" id="IPR011709">
    <property type="entry name" value="DEAD-box_helicase_OB_fold"/>
</dbReference>
<dbReference type="InterPro" id="IPR011545">
    <property type="entry name" value="DEAD/DEAH_box_helicase_dom"/>
</dbReference>
<dbReference type="InterPro" id="IPR014720">
    <property type="entry name" value="dsRBD_dom"/>
</dbReference>
<dbReference type="InterPro" id="IPR048333">
    <property type="entry name" value="HA2_WH"/>
</dbReference>
<dbReference type="InterPro" id="IPR007502">
    <property type="entry name" value="Helicase-assoc_dom"/>
</dbReference>
<dbReference type="InterPro" id="IPR014001">
    <property type="entry name" value="Helicase_ATP-bd"/>
</dbReference>
<dbReference type="InterPro" id="IPR001650">
    <property type="entry name" value="Helicase_C-like"/>
</dbReference>
<dbReference type="InterPro" id="IPR027417">
    <property type="entry name" value="P-loop_NTPase"/>
</dbReference>
<dbReference type="PANTHER" id="PTHR18934">
    <property type="entry name" value="ATP-DEPENDENT RNA HELICASE"/>
    <property type="match status" value="1"/>
</dbReference>
<dbReference type="PANTHER" id="PTHR18934:SF229">
    <property type="entry name" value="DEXH-BOX ATP-DEPENDENT RNA HELICASE DEXH3"/>
    <property type="match status" value="1"/>
</dbReference>
<dbReference type="Pfam" id="PF00270">
    <property type="entry name" value="DEAD"/>
    <property type="match status" value="1"/>
</dbReference>
<dbReference type="Pfam" id="PF00035">
    <property type="entry name" value="dsrm"/>
    <property type="match status" value="1"/>
</dbReference>
<dbReference type="Pfam" id="PF21010">
    <property type="entry name" value="HA2_C"/>
    <property type="match status" value="1"/>
</dbReference>
<dbReference type="Pfam" id="PF04408">
    <property type="entry name" value="HA2_N"/>
    <property type="match status" value="1"/>
</dbReference>
<dbReference type="Pfam" id="PF00271">
    <property type="entry name" value="Helicase_C"/>
    <property type="match status" value="1"/>
</dbReference>
<dbReference type="Pfam" id="PF07717">
    <property type="entry name" value="OB_NTP_bind"/>
    <property type="match status" value="1"/>
</dbReference>
<dbReference type="SMART" id="SM00487">
    <property type="entry name" value="DEXDc"/>
    <property type="match status" value="1"/>
</dbReference>
<dbReference type="SMART" id="SM00847">
    <property type="entry name" value="HA2"/>
    <property type="match status" value="1"/>
</dbReference>
<dbReference type="SMART" id="SM00490">
    <property type="entry name" value="HELICc"/>
    <property type="match status" value="1"/>
</dbReference>
<dbReference type="SUPFAM" id="SSF54768">
    <property type="entry name" value="dsRNA-binding domain-like"/>
    <property type="match status" value="1"/>
</dbReference>
<dbReference type="SUPFAM" id="SSF52540">
    <property type="entry name" value="P-loop containing nucleoside triphosphate hydrolases"/>
    <property type="match status" value="1"/>
</dbReference>
<dbReference type="PROSITE" id="PS51192">
    <property type="entry name" value="HELICASE_ATP_BIND_1"/>
    <property type="match status" value="1"/>
</dbReference>
<dbReference type="PROSITE" id="PS51194">
    <property type="entry name" value="HELICASE_CTER"/>
    <property type="match status" value="1"/>
</dbReference>
<proteinExistence type="inferred from homology"/>
<evidence type="ECO:0000255" key="1">
    <source>
        <dbReference type="PROSITE-ProRule" id="PRU00541"/>
    </source>
</evidence>
<evidence type="ECO:0000255" key="2">
    <source>
        <dbReference type="PROSITE-ProRule" id="PRU00542"/>
    </source>
</evidence>
<evidence type="ECO:0000305" key="3"/>
<evidence type="ECO:0000312" key="4">
    <source>
        <dbReference type="Araport" id="AT1G48650"/>
    </source>
</evidence>
<evidence type="ECO:0000312" key="5">
    <source>
        <dbReference type="EMBL" id="AAG60124.1"/>
    </source>
</evidence>
<keyword id="KW-0025">Alternative splicing</keyword>
<keyword id="KW-0067">ATP-binding</keyword>
<keyword id="KW-0347">Helicase</keyword>
<keyword id="KW-0378">Hydrolase</keyword>
<keyword id="KW-0547">Nucleotide-binding</keyword>
<keyword id="KW-1185">Reference proteome</keyword>
<keyword id="KW-0694">RNA-binding</keyword>
<reference key="1">
    <citation type="journal article" date="2000" name="Nature">
        <title>Sequence and analysis of chromosome 1 of the plant Arabidopsis thaliana.</title>
        <authorList>
            <person name="Theologis A."/>
            <person name="Ecker J.R."/>
            <person name="Palm C.J."/>
            <person name="Federspiel N.A."/>
            <person name="Kaul S."/>
            <person name="White O."/>
            <person name="Alonso J."/>
            <person name="Altafi H."/>
            <person name="Araujo R."/>
            <person name="Bowman C.L."/>
            <person name="Brooks S.Y."/>
            <person name="Buehler E."/>
            <person name="Chan A."/>
            <person name="Chao Q."/>
            <person name="Chen H."/>
            <person name="Cheuk R.F."/>
            <person name="Chin C.W."/>
            <person name="Chung M.K."/>
            <person name="Conn L."/>
            <person name="Conway A.B."/>
            <person name="Conway A.R."/>
            <person name="Creasy T.H."/>
            <person name="Dewar K."/>
            <person name="Dunn P."/>
            <person name="Etgu P."/>
            <person name="Feldblyum T.V."/>
            <person name="Feng J.-D."/>
            <person name="Fong B."/>
            <person name="Fujii C.Y."/>
            <person name="Gill J.E."/>
            <person name="Goldsmith A.D."/>
            <person name="Haas B."/>
            <person name="Hansen N.F."/>
            <person name="Hughes B."/>
            <person name="Huizar L."/>
            <person name="Hunter J.L."/>
            <person name="Jenkins J."/>
            <person name="Johnson-Hopson C."/>
            <person name="Khan S."/>
            <person name="Khaykin E."/>
            <person name="Kim C.J."/>
            <person name="Koo H.L."/>
            <person name="Kremenetskaia I."/>
            <person name="Kurtz D.B."/>
            <person name="Kwan A."/>
            <person name="Lam B."/>
            <person name="Langin-Hooper S."/>
            <person name="Lee A."/>
            <person name="Lee J.M."/>
            <person name="Lenz C.A."/>
            <person name="Li J.H."/>
            <person name="Li Y.-P."/>
            <person name="Lin X."/>
            <person name="Liu S.X."/>
            <person name="Liu Z.A."/>
            <person name="Luros J.S."/>
            <person name="Maiti R."/>
            <person name="Marziali A."/>
            <person name="Militscher J."/>
            <person name="Miranda M."/>
            <person name="Nguyen M."/>
            <person name="Nierman W.C."/>
            <person name="Osborne B.I."/>
            <person name="Pai G."/>
            <person name="Peterson J."/>
            <person name="Pham P.K."/>
            <person name="Rizzo M."/>
            <person name="Rooney T."/>
            <person name="Rowley D."/>
            <person name="Sakano H."/>
            <person name="Salzberg S.L."/>
            <person name="Schwartz J.R."/>
            <person name="Shinn P."/>
            <person name="Southwick A.M."/>
            <person name="Sun H."/>
            <person name="Tallon L.J."/>
            <person name="Tambunga G."/>
            <person name="Toriumi M.J."/>
            <person name="Town C.D."/>
            <person name="Utterback T."/>
            <person name="Van Aken S."/>
            <person name="Vaysberg M."/>
            <person name="Vysotskaia V.S."/>
            <person name="Walker M."/>
            <person name="Wu D."/>
            <person name="Yu G."/>
            <person name="Fraser C.M."/>
            <person name="Venter J.C."/>
            <person name="Davis R.W."/>
        </authorList>
    </citation>
    <scope>NUCLEOTIDE SEQUENCE [LARGE SCALE GENOMIC DNA]</scope>
    <source>
        <strain>cv. Columbia</strain>
    </source>
</reference>
<reference key="2">
    <citation type="journal article" date="2017" name="Plant J.">
        <title>Araport11: a complete reannotation of the Arabidopsis thaliana reference genome.</title>
        <authorList>
            <person name="Cheng C.Y."/>
            <person name="Krishnakumar V."/>
            <person name="Chan A.P."/>
            <person name="Thibaud-Nissen F."/>
            <person name="Schobel S."/>
            <person name="Town C.D."/>
        </authorList>
    </citation>
    <scope>GENOME REANNOTATION</scope>
    <source>
        <strain>cv. Columbia</strain>
    </source>
</reference>
<reference key="3">
    <citation type="journal article" date="2013" name="PLoS ONE">
        <title>Genome-wide comparative in silico analysis of the RNA helicase gene family in Zea mays and Glycine max: a comparison with Arabidopsis and Oryza sativa.</title>
        <authorList>
            <person name="Xu R."/>
            <person name="Zhang S."/>
            <person name="Huang J."/>
            <person name="Zheng C."/>
        </authorList>
    </citation>
    <scope>GENE FAMILY</scope>
</reference>
<name>DEXH3_ARATH</name>
<feature type="chain" id="PRO_0000435293" description="DExH-box ATP-dependent RNA helicase DExH3">
    <location>
        <begin position="1"/>
        <end position="1197"/>
    </location>
</feature>
<feature type="domain" description="Helicase ATP-binding" evidence="1">
    <location>
        <begin position="309"/>
        <end position="476"/>
    </location>
</feature>
<feature type="domain" description="Helicase C-terminal" evidence="2">
    <location>
        <begin position="564"/>
        <end position="738"/>
    </location>
</feature>
<feature type="short sequence motif" description="DEIH box" evidence="3">
    <location>
        <begin position="423"/>
        <end position="426"/>
    </location>
</feature>
<feature type="binding site" evidence="1">
    <location>
        <begin position="322"/>
        <end position="329"/>
    </location>
    <ligand>
        <name>ATP</name>
        <dbReference type="ChEBI" id="CHEBI:30616"/>
    </ligand>
</feature>
<comment type="catalytic activity">
    <reaction evidence="3">
        <text>ATP + H2O = ADP + phosphate + H(+)</text>
        <dbReference type="Rhea" id="RHEA:13065"/>
        <dbReference type="ChEBI" id="CHEBI:15377"/>
        <dbReference type="ChEBI" id="CHEBI:15378"/>
        <dbReference type="ChEBI" id="CHEBI:30616"/>
        <dbReference type="ChEBI" id="CHEBI:43474"/>
        <dbReference type="ChEBI" id="CHEBI:456216"/>
        <dbReference type="EC" id="3.6.4.13"/>
    </reaction>
</comment>
<comment type="alternative products">
    <event type="alternative splicing"/>
    <isoform>
        <id>F4HYJ7-1</id>
        <name>1</name>
        <sequence type="displayed"/>
    </isoform>
    <text>A number of isoforms are produced. According to EST sequences.</text>
</comment>
<comment type="similarity">
    <text evidence="3">Belongs to the DExH box helicase family.</text>
</comment>
<comment type="sequence caution" evidence="3">
    <conflict type="erroneous gene model prediction">
        <sequence resource="EMBL-CDS" id="AAG60124"/>
    </conflict>
</comment>
<organism>
    <name type="scientific">Arabidopsis thaliana</name>
    <name type="common">Mouse-ear cress</name>
    <dbReference type="NCBI Taxonomy" id="3702"/>
    <lineage>
        <taxon>Eukaryota</taxon>
        <taxon>Viridiplantae</taxon>
        <taxon>Streptophyta</taxon>
        <taxon>Embryophyta</taxon>
        <taxon>Tracheophyta</taxon>
        <taxon>Spermatophyta</taxon>
        <taxon>Magnoliopsida</taxon>
        <taxon>eudicotyledons</taxon>
        <taxon>Gunneridae</taxon>
        <taxon>Pentapetalae</taxon>
        <taxon>rosids</taxon>
        <taxon>malvids</taxon>
        <taxon>Brassicales</taxon>
        <taxon>Brassicaceae</taxon>
        <taxon>Camelineae</taxon>
        <taxon>Arabidopsis</taxon>
    </lineage>
</organism>
<sequence>MQLYSAIFRGHIRPNAVVGAASMFIQHNSIQLHRSPKLLLRPSSVVRSLHCRRSGGLVTHSQRSRVLCVKAARGDASSSTLGIEWRAANLPYFQRQNSGYGRIAYNDYESSDESDRDVGSSQSQQMAGSTLDNIDQWRFKLTMLLRNKEDQEVVSRERKDRRDFDHISALATRMGLHSRQYSKIVVISKAPLPNYRPDLDDKRPQREVVLPFGLQSEVDAHLHSFLDQKKTLIPEMPRQNSSESLANGYGNYETPETVMQNSLARERILRPRSLQLKSKQQQWVDSPEGQKMVGFRKTLPAYKEKDALLKAIAANQVVVVSGETGCGKTTQLPQYILESEIEAARGATCSIICTQPRRISAISVSERVAAERGEQIGESVGYKVRLEGMRGRDTRLLFCTTGVLLRRLLVDRSLKGVTHVVVDEIHERGMNEDFLLIVLKDLLPRRPDLKLILMSATLNAELFSSYFGGAPAMHIPGFTYPVRAHFLEDYLETSGYRLTTYNQIDDYGEEKTWKMQKQAQFKKRKSLISSAVEDALEAADFKGYNFRTRDSLSCWSPDSIGFNLIENVLCHIVKGERPGAVLVFMTGWDDINSLKNQLEAHSLLGDPNKVLLLACHGSMASSEQRLIFDRPPEGIRKIVLATNMAETSITINDVVYVIDCGKAKETSYDALNNTPCLLPSWISKAAARQRRGRAGRVMPGECYHLYPRCVYEAFADYQQPELLRTPLQSLCLQIKSLGLGSISEFLSRALQPPEALSVQNAVEYLKIIGALDDDENLTPLGKNLSMLPVEPKLGKMLILGAIFNCLDPVMTVVAGLSVRDPFLMPFDKKDLAETARSKFSGRDYSDHLTLVRAYNGWKDAERTHSGYDYCWKNFLSSQTLKAMDSMRKQFFNLLKEASLIDNIEGCSKLSHDEHLVRAIICAGMFPGVCSVVNKEKSITLKTMEDGQVLLYSSSVNGNVPMIPFPWLVFNDKVKVNSVFLRDSTAVSDSVLLLFGDKISSGGFDGHLKMLGGYLEFFMKPTLAYTYLSLKRELDELIQNKLVNPKLDIQLYDKLMTAIRLLVSEDQCEGRFVYGRKALSPTPAKKLKDVGAQLQNSGGENNKNQLQTLLARAGHGSPVYKTRQLKNNQFRSMVTFNGLDFMGKPCGSKKNAEKDAAHEALLWLQGESKSSLNDLNHMSMLLKKNKSKNHAKASTKWG</sequence>